<proteinExistence type="inferred from homology"/>
<reference key="1">
    <citation type="journal article" date="2006" name="BMC Biol.">
        <title>The complete chloroplast DNA sequence of the green alga Oltmannsiellopsis viridis reveals a distinctive quadripartite architecture in the chloroplast genome of early diverging ulvophytes.</title>
        <authorList>
            <person name="Pombert J.-F."/>
            <person name="Lemieux C."/>
            <person name="Turmel M."/>
        </authorList>
    </citation>
    <scope>NUCLEOTIDE SEQUENCE [LARGE SCALE GENOMIC DNA]</scope>
</reference>
<keyword id="KW-0004">4Fe-4S</keyword>
<keyword id="KW-0148">Chlorophyll</keyword>
<keyword id="KW-0150">Chloroplast</keyword>
<keyword id="KW-0157">Chromophore</keyword>
<keyword id="KW-0249">Electron transport</keyword>
<keyword id="KW-0408">Iron</keyword>
<keyword id="KW-0411">Iron-sulfur</keyword>
<keyword id="KW-0460">Magnesium</keyword>
<keyword id="KW-0472">Membrane</keyword>
<keyword id="KW-0479">Metal-binding</keyword>
<keyword id="KW-0560">Oxidoreductase</keyword>
<keyword id="KW-0602">Photosynthesis</keyword>
<keyword id="KW-0603">Photosystem I</keyword>
<keyword id="KW-0934">Plastid</keyword>
<keyword id="KW-0793">Thylakoid</keyword>
<keyword id="KW-0812">Transmembrane</keyword>
<keyword id="KW-1133">Transmembrane helix</keyword>
<keyword id="KW-0813">Transport</keyword>
<name>PSAB_OLTVI</name>
<comment type="function">
    <text evidence="1">PsaA and PsaB bind P700, the primary electron donor of photosystem I (PSI), as well as the electron acceptors A0, A1 and FX. PSI is a plastocyanin/cytochrome c6-ferredoxin oxidoreductase, converting photonic excitation into a charge separation, which transfers an electron from the donor P700 chlorophyll pair to the spectroscopically characterized acceptors A0, A1, FX, FA and FB in turn. Oxidized P700 is reduced on the lumenal side of the thylakoid membrane by plastocyanin or cytochrome c6.</text>
</comment>
<comment type="catalytic activity">
    <reaction evidence="1">
        <text>reduced [plastocyanin] + hnu + oxidized [2Fe-2S]-[ferredoxin] = oxidized [plastocyanin] + reduced [2Fe-2S]-[ferredoxin]</text>
        <dbReference type="Rhea" id="RHEA:30407"/>
        <dbReference type="Rhea" id="RHEA-COMP:10000"/>
        <dbReference type="Rhea" id="RHEA-COMP:10001"/>
        <dbReference type="Rhea" id="RHEA-COMP:10039"/>
        <dbReference type="Rhea" id="RHEA-COMP:10040"/>
        <dbReference type="ChEBI" id="CHEBI:29036"/>
        <dbReference type="ChEBI" id="CHEBI:30212"/>
        <dbReference type="ChEBI" id="CHEBI:33737"/>
        <dbReference type="ChEBI" id="CHEBI:33738"/>
        <dbReference type="ChEBI" id="CHEBI:49552"/>
        <dbReference type="EC" id="1.97.1.12"/>
    </reaction>
</comment>
<comment type="cofactor">
    <text evidence="1">P700 is a chlorophyll a/chlorophyll a' dimer, A0 is one or more chlorophyll a, A1 is one or both phylloquinones and FX is a shared 4Fe-4S iron-sulfur center.</text>
</comment>
<comment type="subunit">
    <text evidence="1">The PsaA/B heterodimer binds the P700 chlorophyll special pair and subsequent electron acceptors. PSI consists of a core antenna complex that captures photons, and an electron transfer chain that converts photonic excitation into a charge separation. The eukaryotic PSI reaction center is composed of at least 11 subunits.</text>
</comment>
<comment type="subcellular location">
    <subcellularLocation>
        <location>Plastid</location>
        <location>Chloroplast thylakoid membrane</location>
        <topology>Multi-pass membrane protein</topology>
    </subcellularLocation>
</comment>
<comment type="similarity">
    <text evidence="1">Belongs to the PsaA/PsaB family.</text>
</comment>
<organism>
    <name type="scientific">Oltmannsiellopsis viridis</name>
    <name type="common">Marine flagellate</name>
    <name type="synonym">Oltmannsiella viridis</name>
    <dbReference type="NCBI Taxonomy" id="51324"/>
    <lineage>
        <taxon>Eukaryota</taxon>
        <taxon>Viridiplantae</taxon>
        <taxon>Chlorophyta</taxon>
        <taxon>Ulvophyceae</taxon>
        <taxon>Oltmannsiellopsidales</taxon>
        <taxon>Oltmannsiellopsidaceae</taxon>
        <taxon>Oltmannsiellopsis</taxon>
    </lineage>
</organism>
<sequence length="734" mass="81590">MATKFPKFSQGLAQDPTTRRIWFGIATAHDFESHDGMTEENLYQKIFASHFGQLAIIFLWTSGNLFHVAWQGNFEQWIKDPLHIRPIAHAIWDPHFGQPAVEAFTRGGASGPVNIATSGVYQWWYTIGMRTNQELYTASVFLSLMAGVFLFAGWLHLQPKFQPSLSWFKNAESRLNHHLSGLFGVSSLAWTGHLVHVAIPAARGQRVGWDNFLTTLPHPEGLTPFFTGNWAAYAANPDSANHIFGTSAGAGTAILTFLGGFHPQTQSLWLTDIAHHHLAIAVVFIIAGHQYRTNFGIGHSMREILDAHTPPAGGLGAGHKGLFDTVNNSLHFQLGLALASVGTICSMVAQHIYSLPPYAFLAQDYTAQAALYTHHQYIAGFIMCGAFAHGAIFFIRDYDPEQNKGNVLARILDHKEAIISHLSWVSLFLGFHTLGLYVHNDVMQAFGTPEKQILIEPVFAQWIQAAQGKALYGFDFLLSSSASPAYSASQSVWLPGWLDAINSNNNSLFLTIGPGDFLVHHAIALGLHTTTLILVKGALDARGSKLMPDKKDFGYSFPCDGPGRGGTCDISAWDAFYLAVFWMLNTIGWVTFYFHWKHLGIWQGNVSQFNESSTYLMGWLRDYLWLNSSQLINGYNPNGMNSLGVWSWAFLLAHLIYATGFMFLISWRGYWQELIETLVWSHERTPLASLVRWRDKPVALSIVQARLVGLVHFSVGYVLTYGSFLIASTSSKFG</sequence>
<protein>
    <recommendedName>
        <fullName evidence="1">Photosystem I P700 chlorophyll a apoprotein A2</fullName>
        <ecNumber evidence="1">1.97.1.12</ecNumber>
    </recommendedName>
    <alternativeName>
        <fullName evidence="1">PSI-B</fullName>
    </alternativeName>
    <alternativeName>
        <fullName evidence="1">PsaB</fullName>
    </alternativeName>
</protein>
<evidence type="ECO:0000255" key="1">
    <source>
        <dbReference type="HAMAP-Rule" id="MF_00482"/>
    </source>
</evidence>
<dbReference type="EC" id="1.97.1.12" evidence="1"/>
<dbReference type="EMBL" id="DQ291132">
    <property type="protein sequence ID" value="ABB81946.1"/>
    <property type="molecule type" value="Genomic_DNA"/>
</dbReference>
<dbReference type="RefSeq" id="YP_635878.1">
    <property type="nucleotide sequence ID" value="NC_008099.1"/>
</dbReference>
<dbReference type="SMR" id="Q20EW7"/>
<dbReference type="GeneID" id="4100125"/>
<dbReference type="GO" id="GO:0009535">
    <property type="term" value="C:chloroplast thylakoid membrane"/>
    <property type="evidence" value="ECO:0007669"/>
    <property type="project" value="UniProtKB-SubCell"/>
</dbReference>
<dbReference type="GO" id="GO:0009522">
    <property type="term" value="C:photosystem I"/>
    <property type="evidence" value="ECO:0007669"/>
    <property type="project" value="UniProtKB-KW"/>
</dbReference>
<dbReference type="GO" id="GO:0051539">
    <property type="term" value="F:4 iron, 4 sulfur cluster binding"/>
    <property type="evidence" value="ECO:0007669"/>
    <property type="project" value="UniProtKB-KW"/>
</dbReference>
<dbReference type="GO" id="GO:0016168">
    <property type="term" value="F:chlorophyll binding"/>
    <property type="evidence" value="ECO:0007669"/>
    <property type="project" value="UniProtKB-KW"/>
</dbReference>
<dbReference type="GO" id="GO:0009055">
    <property type="term" value="F:electron transfer activity"/>
    <property type="evidence" value="ECO:0007669"/>
    <property type="project" value="UniProtKB-UniRule"/>
</dbReference>
<dbReference type="GO" id="GO:0000287">
    <property type="term" value="F:magnesium ion binding"/>
    <property type="evidence" value="ECO:0007669"/>
    <property type="project" value="UniProtKB-UniRule"/>
</dbReference>
<dbReference type="GO" id="GO:0016491">
    <property type="term" value="F:oxidoreductase activity"/>
    <property type="evidence" value="ECO:0007669"/>
    <property type="project" value="UniProtKB-KW"/>
</dbReference>
<dbReference type="GO" id="GO:0015979">
    <property type="term" value="P:photosynthesis"/>
    <property type="evidence" value="ECO:0007669"/>
    <property type="project" value="UniProtKB-UniRule"/>
</dbReference>
<dbReference type="FunFam" id="1.20.1130.10:FF:000001">
    <property type="entry name" value="Photosystem I P700 chlorophyll a apoprotein A2"/>
    <property type="match status" value="1"/>
</dbReference>
<dbReference type="Gene3D" id="1.20.1130.10">
    <property type="entry name" value="Photosystem I PsaA/PsaB"/>
    <property type="match status" value="1"/>
</dbReference>
<dbReference type="HAMAP" id="MF_00482">
    <property type="entry name" value="PSI_PsaB"/>
    <property type="match status" value="1"/>
</dbReference>
<dbReference type="InterPro" id="IPR001280">
    <property type="entry name" value="PSI_PsaA/B"/>
</dbReference>
<dbReference type="InterPro" id="IPR020586">
    <property type="entry name" value="PSI_PsaA/B_CS"/>
</dbReference>
<dbReference type="InterPro" id="IPR036408">
    <property type="entry name" value="PSI_PsaA/B_sf"/>
</dbReference>
<dbReference type="InterPro" id="IPR006244">
    <property type="entry name" value="PSI_PsaB"/>
</dbReference>
<dbReference type="NCBIfam" id="TIGR01336">
    <property type="entry name" value="psaB"/>
    <property type="match status" value="1"/>
</dbReference>
<dbReference type="PANTHER" id="PTHR30128">
    <property type="entry name" value="OUTER MEMBRANE PROTEIN, OMPA-RELATED"/>
    <property type="match status" value="1"/>
</dbReference>
<dbReference type="PANTHER" id="PTHR30128:SF19">
    <property type="entry name" value="PHOTOSYSTEM I P700 CHLOROPHYLL A APOPROTEIN A1-RELATED"/>
    <property type="match status" value="1"/>
</dbReference>
<dbReference type="Pfam" id="PF00223">
    <property type="entry name" value="PsaA_PsaB"/>
    <property type="match status" value="1"/>
</dbReference>
<dbReference type="PIRSF" id="PIRSF002905">
    <property type="entry name" value="PSI_A"/>
    <property type="match status" value="1"/>
</dbReference>
<dbReference type="PRINTS" id="PR00257">
    <property type="entry name" value="PHOTSYSPSAAB"/>
</dbReference>
<dbReference type="SUPFAM" id="SSF81558">
    <property type="entry name" value="Photosystem I subunits PsaA/PsaB"/>
    <property type="match status" value="1"/>
</dbReference>
<dbReference type="PROSITE" id="PS00419">
    <property type="entry name" value="PHOTOSYSTEM_I_PSAAB"/>
    <property type="match status" value="1"/>
</dbReference>
<accession>Q20EW7</accession>
<geneLocation type="chloroplast"/>
<gene>
    <name evidence="1" type="primary">psaB</name>
</gene>
<feature type="chain" id="PRO_0000277124" description="Photosystem I P700 chlorophyll a apoprotein A2">
    <location>
        <begin position="1"/>
        <end position="734"/>
    </location>
</feature>
<feature type="transmembrane region" description="Helical; Name=I" evidence="1">
    <location>
        <begin position="46"/>
        <end position="69"/>
    </location>
</feature>
<feature type="transmembrane region" description="Helical; Name=II" evidence="1">
    <location>
        <begin position="135"/>
        <end position="158"/>
    </location>
</feature>
<feature type="transmembrane region" description="Helical; Name=III" evidence="1">
    <location>
        <begin position="175"/>
        <end position="199"/>
    </location>
</feature>
<feature type="transmembrane region" description="Helical; Name=IV" evidence="1">
    <location>
        <begin position="273"/>
        <end position="291"/>
    </location>
</feature>
<feature type="transmembrane region" description="Helical; Name=V" evidence="1">
    <location>
        <begin position="330"/>
        <end position="353"/>
    </location>
</feature>
<feature type="transmembrane region" description="Helical; Name=VI" evidence="1">
    <location>
        <begin position="369"/>
        <end position="395"/>
    </location>
</feature>
<feature type="transmembrane region" description="Helical; Name=VII" evidence="1">
    <location>
        <begin position="417"/>
        <end position="439"/>
    </location>
</feature>
<feature type="transmembrane region" description="Helical; Name=VIII" evidence="1">
    <location>
        <begin position="517"/>
        <end position="535"/>
    </location>
</feature>
<feature type="transmembrane region" description="Helical; Name=IX" evidence="1">
    <location>
        <begin position="575"/>
        <end position="596"/>
    </location>
</feature>
<feature type="transmembrane region" description="Helical; Name=X" evidence="1">
    <location>
        <begin position="643"/>
        <end position="665"/>
    </location>
</feature>
<feature type="transmembrane region" description="Helical; Name=XI" evidence="1">
    <location>
        <begin position="707"/>
        <end position="727"/>
    </location>
</feature>
<feature type="binding site" evidence="1">
    <location>
        <position position="559"/>
    </location>
    <ligand>
        <name>[4Fe-4S] cluster</name>
        <dbReference type="ChEBI" id="CHEBI:49883"/>
        <note>ligand shared between dimeric partners</note>
    </ligand>
</feature>
<feature type="binding site" evidence="1">
    <location>
        <position position="568"/>
    </location>
    <ligand>
        <name>[4Fe-4S] cluster</name>
        <dbReference type="ChEBI" id="CHEBI:49883"/>
        <note>ligand shared between dimeric partners</note>
    </ligand>
</feature>
<feature type="binding site" description="axial binding residue" evidence="1">
    <location>
        <position position="654"/>
    </location>
    <ligand>
        <name>chlorophyll a</name>
        <dbReference type="ChEBI" id="CHEBI:58416"/>
        <label>B1</label>
    </ligand>
    <ligandPart>
        <name>Mg</name>
        <dbReference type="ChEBI" id="CHEBI:25107"/>
    </ligandPart>
</feature>
<feature type="binding site" description="axial binding residue" evidence="1">
    <location>
        <position position="662"/>
    </location>
    <ligand>
        <name>chlorophyll a</name>
        <dbReference type="ChEBI" id="CHEBI:58416"/>
        <label>B3</label>
    </ligand>
    <ligandPart>
        <name>Mg</name>
        <dbReference type="ChEBI" id="CHEBI:25107"/>
    </ligandPart>
</feature>
<feature type="binding site" evidence="1">
    <location>
        <position position="670"/>
    </location>
    <ligand>
        <name>chlorophyll a</name>
        <dbReference type="ChEBI" id="CHEBI:58416"/>
        <label>B3</label>
    </ligand>
</feature>
<feature type="binding site" evidence="1">
    <location>
        <position position="671"/>
    </location>
    <ligand>
        <name>phylloquinone</name>
        <dbReference type="ChEBI" id="CHEBI:18067"/>
        <label>B</label>
    </ligand>
</feature>